<evidence type="ECO:0000255" key="1">
    <source>
        <dbReference type="HAMAP-Rule" id="MF_00144"/>
    </source>
</evidence>
<comment type="function">
    <text evidence="1">Catalyzes the 2-thiolation of uridine at the wobble position (U34) of tRNA, leading to the formation of s(2)U34.</text>
</comment>
<comment type="catalytic activity">
    <reaction evidence="1">
        <text>S-sulfanyl-L-cysteinyl-[protein] + uridine(34) in tRNA + AH2 + ATP = 2-thiouridine(34) in tRNA + L-cysteinyl-[protein] + A + AMP + diphosphate + H(+)</text>
        <dbReference type="Rhea" id="RHEA:47032"/>
        <dbReference type="Rhea" id="RHEA-COMP:10131"/>
        <dbReference type="Rhea" id="RHEA-COMP:11726"/>
        <dbReference type="Rhea" id="RHEA-COMP:11727"/>
        <dbReference type="Rhea" id="RHEA-COMP:11728"/>
        <dbReference type="ChEBI" id="CHEBI:13193"/>
        <dbReference type="ChEBI" id="CHEBI:15378"/>
        <dbReference type="ChEBI" id="CHEBI:17499"/>
        <dbReference type="ChEBI" id="CHEBI:29950"/>
        <dbReference type="ChEBI" id="CHEBI:30616"/>
        <dbReference type="ChEBI" id="CHEBI:33019"/>
        <dbReference type="ChEBI" id="CHEBI:61963"/>
        <dbReference type="ChEBI" id="CHEBI:65315"/>
        <dbReference type="ChEBI" id="CHEBI:87170"/>
        <dbReference type="ChEBI" id="CHEBI:456215"/>
        <dbReference type="EC" id="2.8.1.13"/>
    </reaction>
</comment>
<comment type="subcellular location">
    <subcellularLocation>
        <location evidence="1">Cytoplasm</location>
    </subcellularLocation>
</comment>
<comment type="similarity">
    <text evidence="1">Belongs to the MnmA/TRMU family.</text>
</comment>
<accession>Q8YIL6</accession>
<protein>
    <recommendedName>
        <fullName evidence="1">tRNA-specific 2-thiouridylase MnmA</fullName>
        <ecNumber evidence="1">2.8.1.13</ecNumber>
    </recommendedName>
</protein>
<gene>
    <name evidence="1" type="primary">mnmA</name>
    <name type="synonym">trmU</name>
    <name type="ordered locus">BMEI0428</name>
</gene>
<feature type="chain" id="PRO_0000121613" description="tRNA-specific 2-thiouridylase MnmA">
    <location>
        <begin position="1"/>
        <end position="398"/>
    </location>
</feature>
<feature type="region of interest" description="Interaction with tRNA" evidence="1">
    <location>
        <begin position="160"/>
        <end position="162"/>
    </location>
</feature>
<feature type="active site" description="Nucleophile" evidence="1">
    <location>
        <position position="114"/>
    </location>
</feature>
<feature type="active site" description="Cysteine persulfide intermediate" evidence="1">
    <location>
        <position position="210"/>
    </location>
</feature>
<feature type="binding site" evidence="1">
    <location>
        <begin position="20"/>
        <end position="27"/>
    </location>
    <ligand>
        <name>ATP</name>
        <dbReference type="ChEBI" id="CHEBI:30616"/>
    </ligand>
</feature>
<feature type="binding site" evidence="1">
    <location>
        <position position="46"/>
    </location>
    <ligand>
        <name>ATP</name>
        <dbReference type="ChEBI" id="CHEBI:30616"/>
    </ligand>
</feature>
<feature type="binding site" evidence="1">
    <location>
        <position position="138"/>
    </location>
    <ligand>
        <name>ATP</name>
        <dbReference type="ChEBI" id="CHEBI:30616"/>
    </ligand>
</feature>
<feature type="site" description="Interaction with tRNA" evidence="1">
    <location>
        <position position="139"/>
    </location>
</feature>
<feature type="site" description="Interaction with tRNA" evidence="1">
    <location>
        <position position="352"/>
    </location>
</feature>
<feature type="disulfide bond" description="Alternate" evidence="1">
    <location>
        <begin position="114"/>
        <end position="210"/>
    </location>
</feature>
<reference key="1">
    <citation type="journal article" date="2002" name="Proc. Natl. Acad. Sci. U.S.A.">
        <title>The genome sequence of the facultative intracellular pathogen Brucella melitensis.</title>
        <authorList>
            <person name="DelVecchio V.G."/>
            <person name="Kapatral V."/>
            <person name="Redkar R.J."/>
            <person name="Patra G."/>
            <person name="Mujer C."/>
            <person name="Los T."/>
            <person name="Ivanova N."/>
            <person name="Anderson I."/>
            <person name="Bhattacharyya A."/>
            <person name="Lykidis A."/>
            <person name="Reznik G."/>
            <person name="Jablonski L."/>
            <person name="Larsen N."/>
            <person name="D'Souza M."/>
            <person name="Bernal A."/>
            <person name="Mazur M."/>
            <person name="Goltsman E."/>
            <person name="Selkov E."/>
            <person name="Elzer P.H."/>
            <person name="Hagius S."/>
            <person name="O'Callaghan D."/>
            <person name="Letesson J.-J."/>
            <person name="Haselkorn R."/>
            <person name="Kyrpides N.C."/>
            <person name="Overbeek R."/>
        </authorList>
    </citation>
    <scope>NUCLEOTIDE SEQUENCE [LARGE SCALE GENOMIC DNA]</scope>
    <source>
        <strain>ATCC 23456 / CCUG 17765 / NCTC 10094 / 16M</strain>
    </source>
</reference>
<organism>
    <name type="scientific">Brucella melitensis biotype 1 (strain ATCC 23456 / CCUG 17765 / NCTC 10094 / 16M)</name>
    <dbReference type="NCBI Taxonomy" id="224914"/>
    <lineage>
        <taxon>Bacteria</taxon>
        <taxon>Pseudomonadati</taxon>
        <taxon>Pseudomonadota</taxon>
        <taxon>Alphaproteobacteria</taxon>
        <taxon>Hyphomicrobiales</taxon>
        <taxon>Brucellaceae</taxon>
        <taxon>Brucella/Ochrobactrum group</taxon>
        <taxon>Brucella</taxon>
    </lineage>
</organism>
<proteinExistence type="inferred from homology"/>
<sequence length="398" mass="43176">MSLNSLDLPGKPEDTRVVVAMSGGVDSSVVAGILKREGYDVVGVTLQLYDHGAAVHRAGSCCAGQDIEDARRVSESLGIPHYVLDYEARFREAVIDPFANSYVSGETPIPCVSCNQTVKFADLLQTARDLGADALATGHYIRSRANGAHRALYRPVDTDRDQSYFLFATTQEQIDYLRFPLGHLPKAQVREIAEELGLTVAKKQDSQDICFVPQGKYSDIISRLKPEAANPGDIVHIDGRTLGRHDGIVHYTVGQRRGIGVATGEALYVVHLDAANARVIVGPREALETHKVFLRDVNWLGDTPIADLPKSGMEVFAKVRSTRPPRPAVLRHADGQTWVELVDGESGIAPGQACVLYSDDSNAACVFGGGFIGRSEREPQAEEMLRRLMANADKASAA</sequence>
<name>MNMA_BRUME</name>
<keyword id="KW-0067">ATP-binding</keyword>
<keyword id="KW-0963">Cytoplasm</keyword>
<keyword id="KW-1015">Disulfide bond</keyword>
<keyword id="KW-0547">Nucleotide-binding</keyword>
<keyword id="KW-0694">RNA-binding</keyword>
<keyword id="KW-0808">Transferase</keyword>
<keyword id="KW-0819">tRNA processing</keyword>
<keyword id="KW-0820">tRNA-binding</keyword>
<dbReference type="EC" id="2.8.1.13" evidence="1"/>
<dbReference type="EMBL" id="AE008917">
    <property type="protein sequence ID" value="AAL51609.1"/>
    <property type="molecule type" value="Genomic_DNA"/>
</dbReference>
<dbReference type="PIR" id="AF3305">
    <property type="entry name" value="AF3305"/>
</dbReference>
<dbReference type="RefSeq" id="WP_004684096.1">
    <property type="nucleotide sequence ID" value="NC_003317.1"/>
</dbReference>
<dbReference type="SMR" id="Q8YIL6"/>
<dbReference type="GeneID" id="29593212"/>
<dbReference type="KEGG" id="bme:BMEI0428"/>
<dbReference type="KEGG" id="bmel:DK63_992"/>
<dbReference type="PATRIC" id="fig|224914.52.peg.1050"/>
<dbReference type="eggNOG" id="COG0482">
    <property type="taxonomic scope" value="Bacteria"/>
</dbReference>
<dbReference type="PhylomeDB" id="Q8YIL6"/>
<dbReference type="Proteomes" id="UP000000419">
    <property type="component" value="Chromosome I"/>
</dbReference>
<dbReference type="GO" id="GO:0005737">
    <property type="term" value="C:cytoplasm"/>
    <property type="evidence" value="ECO:0007669"/>
    <property type="project" value="UniProtKB-SubCell"/>
</dbReference>
<dbReference type="GO" id="GO:0005524">
    <property type="term" value="F:ATP binding"/>
    <property type="evidence" value="ECO:0007669"/>
    <property type="project" value="UniProtKB-KW"/>
</dbReference>
<dbReference type="GO" id="GO:0000049">
    <property type="term" value="F:tRNA binding"/>
    <property type="evidence" value="ECO:0007669"/>
    <property type="project" value="UniProtKB-KW"/>
</dbReference>
<dbReference type="GO" id="GO:0103016">
    <property type="term" value="F:tRNA-uridine 2-sulfurtransferase activity"/>
    <property type="evidence" value="ECO:0007669"/>
    <property type="project" value="UniProtKB-EC"/>
</dbReference>
<dbReference type="GO" id="GO:0002143">
    <property type="term" value="P:tRNA wobble position uridine thiolation"/>
    <property type="evidence" value="ECO:0007669"/>
    <property type="project" value="TreeGrafter"/>
</dbReference>
<dbReference type="CDD" id="cd01998">
    <property type="entry name" value="MnmA_TRMU-like"/>
    <property type="match status" value="1"/>
</dbReference>
<dbReference type="FunFam" id="2.30.30.280:FF:000001">
    <property type="entry name" value="tRNA-specific 2-thiouridylase MnmA"/>
    <property type="match status" value="1"/>
</dbReference>
<dbReference type="FunFam" id="3.40.50.620:FF:000115">
    <property type="entry name" value="tRNA-specific 2-thiouridylase MnmA"/>
    <property type="match status" value="1"/>
</dbReference>
<dbReference type="Gene3D" id="2.30.30.280">
    <property type="entry name" value="Adenine nucleotide alpha hydrolases-like domains"/>
    <property type="match status" value="1"/>
</dbReference>
<dbReference type="Gene3D" id="3.40.50.620">
    <property type="entry name" value="HUPs"/>
    <property type="match status" value="1"/>
</dbReference>
<dbReference type="Gene3D" id="2.40.30.10">
    <property type="entry name" value="Translation factors"/>
    <property type="match status" value="1"/>
</dbReference>
<dbReference type="HAMAP" id="MF_00144">
    <property type="entry name" value="tRNA_thiouridyl_MnmA"/>
    <property type="match status" value="1"/>
</dbReference>
<dbReference type="InterPro" id="IPR004506">
    <property type="entry name" value="MnmA-like"/>
</dbReference>
<dbReference type="InterPro" id="IPR046885">
    <property type="entry name" value="MnmA-like_C"/>
</dbReference>
<dbReference type="InterPro" id="IPR046884">
    <property type="entry name" value="MnmA-like_central"/>
</dbReference>
<dbReference type="InterPro" id="IPR023382">
    <property type="entry name" value="MnmA-like_central_sf"/>
</dbReference>
<dbReference type="InterPro" id="IPR014729">
    <property type="entry name" value="Rossmann-like_a/b/a_fold"/>
</dbReference>
<dbReference type="NCBIfam" id="NF001138">
    <property type="entry name" value="PRK00143.1"/>
    <property type="match status" value="1"/>
</dbReference>
<dbReference type="NCBIfam" id="TIGR00420">
    <property type="entry name" value="trmU"/>
    <property type="match status" value="1"/>
</dbReference>
<dbReference type="PANTHER" id="PTHR11933:SF5">
    <property type="entry name" value="MITOCHONDRIAL TRNA-SPECIFIC 2-THIOURIDYLASE 1"/>
    <property type="match status" value="1"/>
</dbReference>
<dbReference type="PANTHER" id="PTHR11933">
    <property type="entry name" value="TRNA 5-METHYLAMINOMETHYL-2-THIOURIDYLATE -METHYLTRANSFERASE"/>
    <property type="match status" value="1"/>
</dbReference>
<dbReference type="Pfam" id="PF03054">
    <property type="entry name" value="tRNA_Me_trans"/>
    <property type="match status" value="1"/>
</dbReference>
<dbReference type="Pfam" id="PF20258">
    <property type="entry name" value="tRNA_Me_trans_C"/>
    <property type="match status" value="1"/>
</dbReference>
<dbReference type="Pfam" id="PF20259">
    <property type="entry name" value="tRNA_Me_trans_M"/>
    <property type="match status" value="1"/>
</dbReference>
<dbReference type="SUPFAM" id="SSF52402">
    <property type="entry name" value="Adenine nucleotide alpha hydrolases-like"/>
    <property type="match status" value="1"/>
</dbReference>